<keyword id="KW-0025">Alternative splicing</keyword>
<keyword id="KW-0597">Phosphoprotein</keyword>
<keyword id="KW-1185">Reference proteome</keyword>
<organism>
    <name type="scientific">Rattus norvegicus</name>
    <name type="common">Rat</name>
    <dbReference type="NCBI Taxonomy" id="10116"/>
    <lineage>
        <taxon>Eukaryota</taxon>
        <taxon>Metazoa</taxon>
        <taxon>Chordata</taxon>
        <taxon>Craniata</taxon>
        <taxon>Vertebrata</taxon>
        <taxon>Euteleostomi</taxon>
        <taxon>Mammalia</taxon>
        <taxon>Eutheria</taxon>
        <taxon>Euarchontoglires</taxon>
        <taxon>Glires</taxon>
        <taxon>Rodentia</taxon>
        <taxon>Myomorpha</taxon>
        <taxon>Muroidea</taxon>
        <taxon>Muridae</taxon>
        <taxon>Murinae</taxon>
        <taxon>Rattus</taxon>
    </lineage>
</organism>
<evidence type="ECO:0000256" key="1">
    <source>
        <dbReference type="SAM" id="MobiDB-lite"/>
    </source>
</evidence>
<evidence type="ECO:0000269" key="2">
    <source>
    </source>
</evidence>
<evidence type="ECO:0000303" key="3">
    <source>
    </source>
</evidence>
<evidence type="ECO:0007744" key="4">
    <source>
    </source>
</evidence>
<reference key="1">
    <citation type="journal article" date="2007" name="Physiol. Genomics">
        <title>Cardiac myocyte gene expression profiling during H2O2-induced apoptosis.</title>
        <authorList>
            <person name="Clerk A."/>
            <person name="Kemp T.J."/>
            <person name="Zoumpoulidou G."/>
            <person name="Sugden P.H."/>
        </authorList>
    </citation>
    <scope>NUCLEOTIDE SEQUENCE [MRNA] (ISOFORMS 1 AND 2)</scope>
    <scope>TISSUE SPECIFICITY</scope>
    <scope>INDUCTION</scope>
</reference>
<reference key="2">
    <citation type="journal article" date="2004" name="Nature">
        <title>Genome sequence of the Brown Norway rat yields insights into mammalian evolution.</title>
        <authorList>
            <person name="Gibbs R.A."/>
            <person name="Weinstock G.M."/>
            <person name="Metzker M.L."/>
            <person name="Muzny D.M."/>
            <person name="Sodergren E.J."/>
            <person name="Scherer S."/>
            <person name="Scott G."/>
            <person name="Steffen D."/>
            <person name="Worley K.C."/>
            <person name="Burch P.E."/>
            <person name="Okwuonu G."/>
            <person name="Hines S."/>
            <person name="Lewis L."/>
            <person name="Deramo C."/>
            <person name="Delgado O."/>
            <person name="Dugan-Rocha S."/>
            <person name="Miner G."/>
            <person name="Morgan M."/>
            <person name="Hawes A."/>
            <person name="Gill R."/>
            <person name="Holt R.A."/>
            <person name="Adams M.D."/>
            <person name="Amanatides P.G."/>
            <person name="Baden-Tillson H."/>
            <person name="Barnstead M."/>
            <person name="Chin S."/>
            <person name="Evans C.A."/>
            <person name="Ferriera S."/>
            <person name="Fosler C."/>
            <person name="Glodek A."/>
            <person name="Gu Z."/>
            <person name="Jennings D."/>
            <person name="Kraft C.L."/>
            <person name="Nguyen T."/>
            <person name="Pfannkoch C.M."/>
            <person name="Sitter C."/>
            <person name="Sutton G.G."/>
            <person name="Venter J.C."/>
            <person name="Woodage T."/>
            <person name="Smith D."/>
            <person name="Lee H.-M."/>
            <person name="Gustafson E."/>
            <person name="Cahill P."/>
            <person name="Kana A."/>
            <person name="Doucette-Stamm L."/>
            <person name="Weinstock K."/>
            <person name="Fechtel K."/>
            <person name="Weiss R.B."/>
            <person name="Dunn D.M."/>
            <person name="Green E.D."/>
            <person name="Blakesley R.W."/>
            <person name="Bouffard G.G."/>
            <person name="De Jong P.J."/>
            <person name="Osoegawa K."/>
            <person name="Zhu B."/>
            <person name="Marra M."/>
            <person name="Schein J."/>
            <person name="Bosdet I."/>
            <person name="Fjell C."/>
            <person name="Jones S."/>
            <person name="Krzywinski M."/>
            <person name="Mathewson C."/>
            <person name="Siddiqui A."/>
            <person name="Wye N."/>
            <person name="McPherson J."/>
            <person name="Zhao S."/>
            <person name="Fraser C.M."/>
            <person name="Shetty J."/>
            <person name="Shatsman S."/>
            <person name="Geer K."/>
            <person name="Chen Y."/>
            <person name="Abramzon S."/>
            <person name="Nierman W.C."/>
            <person name="Havlak P.H."/>
            <person name="Chen R."/>
            <person name="Durbin K.J."/>
            <person name="Egan A."/>
            <person name="Ren Y."/>
            <person name="Song X.-Z."/>
            <person name="Li B."/>
            <person name="Liu Y."/>
            <person name="Qin X."/>
            <person name="Cawley S."/>
            <person name="Cooney A.J."/>
            <person name="D'Souza L.M."/>
            <person name="Martin K."/>
            <person name="Wu J.Q."/>
            <person name="Gonzalez-Garay M.L."/>
            <person name="Jackson A.R."/>
            <person name="Kalafus K.J."/>
            <person name="McLeod M.P."/>
            <person name="Milosavljevic A."/>
            <person name="Virk D."/>
            <person name="Volkov A."/>
            <person name="Wheeler D.A."/>
            <person name="Zhang Z."/>
            <person name="Bailey J.A."/>
            <person name="Eichler E.E."/>
            <person name="Tuzun E."/>
            <person name="Birney E."/>
            <person name="Mongin E."/>
            <person name="Ureta-Vidal A."/>
            <person name="Woodwark C."/>
            <person name="Zdobnov E."/>
            <person name="Bork P."/>
            <person name="Suyama M."/>
            <person name="Torrents D."/>
            <person name="Alexandersson M."/>
            <person name="Trask B.J."/>
            <person name="Young J.M."/>
            <person name="Huang H."/>
            <person name="Wang H."/>
            <person name="Xing H."/>
            <person name="Daniels S."/>
            <person name="Gietzen D."/>
            <person name="Schmidt J."/>
            <person name="Stevens K."/>
            <person name="Vitt U."/>
            <person name="Wingrove J."/>
            <person name="Camara F."/>
            <person name="Mar Alba M."/>
            <person name="Abril J.F."/>
            <person name="Guigo R."/>
            <person name="Smit A."/>
            <person name="Dubchak I."/>
            <person name="Rubin E.M."/>
            <person name="Couronne O."/>
            <person name="Poliakov A."/>
            <person name="Huebner N."/>
            <person name="Ganten D."/>
            <person name="Goesele C."/>
            <person name="Hummel O."/>
            <person name="Kreitler T."/>
            <person name="Lee Y.-A."/>
            <person name="Monti J."/>
            <person name="Schulz H."/>
            <person name="Zimdahl H."/>
            <person name="Himmelbauer H."/>
            <person name="Lehrach H."/>
            <person name="Jacob H.J."/>
            <person name="Bromberg S."/>
            <person name="Gullings-Handley J."/>
            <person name="Jensen-Seaman M.I."/>
            <person name="Kwitek A.E."/>
            <person name="Lazar J."/>
            <person name="Pasko D."/>
            <person name="Tonellato P.J."/>
            <person name="Twigger S."/>
            <person name="Ponting C.P."/>
            <person name="Duarte J.M."/>
            <person name="Rice S."/>
            <person name="Goodstadt L."/>
            <person name="Beatson S.A."/>
            <person name="Emes R.D."/>
            <person name="Winter E.E."/>
            <person name="Webber C."/>
            <person name="Brandt P."/>
            <person name="Nyakatura G."/>
            <person name="Adetobi M."/>
            <person name="Chiaromonte F."/>
            <person name="Elnitski L."/>
            <person name="Eswara P."/>
            <person name="Hardison R.C."/>
            <person name="Hou M."/>
            <person name="Kolbe D."/>
            <person name="Makova K."/>
            <person name="Miller W."/>
            <person name="Nekrutenko A."/>
            <person name="Riemer C."/>
            <person name="Schwartz S."/>
            <person name="Taylor J."/>
            <person name="Yang S."/>
            <person name="Zhang Y."/>
            <person name="Lindpaintner K."/>
            <person name="Andrews T.D."/>
            <person name="Caccamo M."/>
            <person name="Clamp M."/>
            <person name="Clarke L."/>
            <person name="Curwen V."/>
            <person name="Durbin R.M."/>
            <person name="Eyras E."/>
            <person name="Searle S.M."/>
            <person name="Cooper G.M."/>
            <person name="Batzoglou S."/>
            <person name="Brudno M."/>
            <person name="Sidow A."/>
            <person name="Stone E.A."/>
            <person name="Payseur B.A."/>
            <person name="Bourque G."/>
            <person name="Lopez-Otin C."/>
            <person name="Puente X.S."/>
            <person name="Chakrabarti K."/>
            <person name="Chatterji S."/>
            <person name="Dewey C."/>
            <person name="Pachter L."/>
            <person name="Bray N."/>
            <person name="Yap V.B."/>
            <person name="Caspi A."/>
            <person name="Tesler G."/>
            <person name="Pevzner P.A."/>
            <person name="Haussler D."/>
            <person name="Roskin K.M."/>
            <person name="Baertsch R."/>
            <person name="Clawson H."/>
            <person name="Furey T.S."/>
            <person name="Hinrichs A.S."/>
            <person name="Karolchik D."/>
            <person name="Kent W.J."/>
            <person name="Rosenbloom K.R."/>
            <person name="Trumbower H."/>
            <person name="Weirauch M."/>
            <person name="Cooper D.N."/>
            <person name="Stenson P.D."/>
            <person name="Ma B."/>
            <person name="Brent M."/>
            <person name="Arumugam M."/>
            <person name="Shteynberg D."/>
            <person name="Copley R.R."/>
            <person name="Taylor M.S."/>
            <person name="Riethman H."/>
            <person name="Mudunuri U."/>
            <person name="Peterson J."/>
            <person name="Guyer M."/>
            <person name="Felsenfeld A."/>
            <person name="Old S."/>
            <person name="Mockrin S."/>
            <person name="Collins F.S."/>
        </authorList>
    </citation>
    <scope>NUCLEOTIDE SEQUENCE [LARGE SCALE GENOMIC DNA]</scope>
    <source>
        <strain>Brown Norway</strain>
    </source>
</reference>
<reference key="3">
    <citation type="submission" date="2005-09" db="EMBL/GenBank/DDBJ databases">
        <authorList>
            <person name="Mural R.J."/>
            <person name="Adams M.D."/>
            <person name="Myers E.W."/>
            <person name="Smith H.O."/>
            <person name="Venter J.C."/>
        </authorList>
    </citation>
    <scope>NUCLEOTIDE SEQUENCE [LARGE SCALE GENOMIC DNA]</scope>
    <source>
        <strain>Brown Norway</strain>
    </source>
</reference>
<reference key="4">
    <citation type="journal article" date="2004" name="Genome Res.">
        <title>The status, quality, and expansion of the NIH full-length cDNA project: the Mammalian Gene Collection (MGC).</title>
        <authorList>
            <consortium name="The MGC Project Team"/>
        </authorList>
    </citation>
    <scope>NUCLEOTIDE SEQUENCE [LARGE SCALE MRNA] (ISOFORM 1)</scope>
    <source>
        <tissue>Testis</tissue>
    </source>
</reference>
<reference key="5">
    <citation type="journal article" date="2006" name="Proc. Natl. Acad. Sci. U.S.A.">
        <title>Quantitative phosphoproteomics of vasopressin-sensitive renal cells: regulation of aquaporin-2 phosphorylation at two sites.</title>
        <authorList>
            <person name="Hoffert J.D."/>
            <person name="Pisitkun T."/>
            <person name="Wang G."/>
            <person name="Shen R.-F."/>
            <person name="Knepper M.A."/>
        </authorList>
    </citation>
    <scope>PHOSPHORYLATION [LARGE SCALE ANALYSIS] AT THR-143</scope>
    <scope>IDENTIFICATION BY MASS SPECTROMETRY [LARGE SCALE ANALYSIS]</scope>
</reference>
<dbReference type="EMBL" id="AJ621831">
    <property type="protein sequence ID" value="CAF21998.1"/>
    <property type="molecule type" value="mRNA"/>
</dbReference>
<dbReference type="EMBL" id="AABR06027504">
    <property type="status" value="NOT_ANNOTATED_CDS"/>
    <property type="molecule type" value="Genomic_DNA"/>
</dbReference>
<dbReference type="EMBL" id="CH474005">
    <property type="protein sequence ID" value="EDL96584.1"/>
    <property type="molecule type" value="Genomic_DNA"/>
</dbReference>
<dbReference type="EMBL" id="CH474005">
    <property type="protein sequence ID" value="EDL96585.1"/>
    <property type="molecule type" value="Genomic_DNA"/>
</dbReference>
<dbReference type="EMBL" id="BC082096">
    <property type="protein sequence ID" value="AAH82096.1"/>
    <property type="molecule type" value="mRNA"/>
</dbReference>
<dbReference type="RefSeq" id="NP_001417127.1">
    <molecule id="Q703I1-1"/>
    <property type="nucleotide sequence ID" value="NM_001430198.1"/>
</dbReference>
<dbReference type="RefSeq" id="NP_001417128.1">
    <molecule id="Q703I1-1"/>
    <property type="nucleotide sequence ID" value="NM_001430199.1"/>
</dbReference>
<dbReference type="RefSeq" id="NP_001417129.1">
    <molecule id="Q703I1-1"/>
    <property type="nucleotide sequence ID" value="NM_001430200.1"/>
</dbReference>
<dbReference type="RefSeq" id="NP_963854.1">
    <molecule id="Q703I1-1"/>
    <property type="nucleotide sequence ID" value="NM_201560.3"/>
</dbReference>
<dbReference type="RefSeq" id="XP_006235590.1">
    <property type="nucleotide sequence ID" value="XM_006235528.3"/>
</dbReference>
<dbReference type="RefSeq" id="XP_017447097.1">
    <property type="nucleotide sequence ID" value="XM_017591608.1"/>
</dbReference>
<dbReference type="FunCoup" id="Q703I1">
    <property type="interactions" value="2153"/>
</dbReference>
<dbReference type="iPTMnet" id="Q703I1"/>
<dbReference type="PhosphoSitePlus" id="Q703I1"/>
<dbReference type="PaxDb" id="10116-ENSRNOP00000011610"/>
<dbReference type="Ensembl" id="ENSRNOT00000113431.1">
    <molecule id="Q703I1-1"/>
    <property type="protein sequence ID" value="ENSRNOP00000084346.1"/>
    <property type="gene ID" value="ENSRNOG00000008297.6"/>
</dbReference>
<dbReference type="GeneID" id="296346"/>
<dbReference type="KEGG" id="rno:296346"/>
<dbReference type="UCSC" id="RGD:1303142">
    <molecule id="Q703I1-1"/>
    <property type="organism name" value="rat"/>
</dbReference>
<dbReference type="AGR" id="RGD:1303142"/>
<dbReference type="CTD" id="51526"/>
<dbReference type="RGD" id="1303142">
    <property type="gene designation" value="Oser1"/>
</dbReference>
<dbReference type="eggNOG" id="ENOG502QUK0">
    <property type="taxonomic scope" value="Eukaryota"/>
</dbReference>
<dbReference type="GeneTree" id="ENSGT00390000018547"/>
<dbReference type="HOGENOM" id="CLU_050222_0_0_1"/>
<dbReference type="InParanoid" id="Q703I1"/>
<dbReference type="OMA" id="KACQCKL"/>
<dbReference type="OrthoDB" id="44373at9989"/>
<dbReference type="PhylomeDB" id="Q703I1"/>
<dbReference type="TreeFam" id="TF331727"/>
<dbReference type="PRO" id="PR:Q703I1"/>
<dbReference type="Proteomes" id="UP000002494">
    <property type="component" value="Chromosome 3"/>
</dbReference>
<dbReference type="Proteomes" id="UP000234681">
    <property type="component" value="Chromosome 3"/>
</dbReference>
<dbReference type="Bgee" id="ENSRNOG00000008297">
    <property type="expression patterns" value="Expressed in testis and 19 other cell types or tissues"/>
</dbReference>
<dbReference type="GO" id="GO:0005634">
    <property type="term" value="C:nucleus"/>
    <property type="evidence" value="ECO:0000266"/>
    <property type="project" value="RGD"/>
</dbReference>
<dbReference type="GO" id="GO:0070301">
    <property type="term" value="P:cellular response to hydrogen peroxide"/>
    <property type="evidence" value="ECO:0000314"/>
    <property type="project" value="UniProtKB"/>
</dbReference>
<dbReference type="InterPro" id="IPR008494">
    <property type="entry name" value="DUF776"/>
</dbReference>
<dbReference type="PANTHER" id="PTHR31383">
    <property type="entry name" value="OXIDATIVE STRESS-RESPONSE SERINE-RICH PROTEIN 1"/>
    <property type="match status" value="1"/>
</dbReference>
<dbReference type="PANTHER" id="PTHR31383:SF2">
    <property type="entry name" value="OXIDATIVE STRESS-RESPONSIVE SERINE-RICH PROTEIN 1"/>
    <property type="match status" value="1"/>
</dbReference>
<dbReference type="Pfam" id="PF05604">
    <property type="entry name" value="DUF776"/>
    <property type="match status" value="1"/>
</dbReference>
<protein>
    <recommendedName>
        <fullName>Oxidative stress-responsive serine-rich protein 1</fullName>
    </recommendedName>
    <alternativeName>
        <fullName>Oxidative stress-responsive protein 1</fullName>
    </alternativeName>
    <alternativeName>
        <fullName>Peroxide-inducible transcript 1 protein</fullName>
    </alternativeName>
</protein>
<gene>
    <name type="primary">Oser1</name>
    <name type="synonym">Osr1</name>
    <name type="synonym">Perit1</name>
</gene>
<name>OSER1_RAT</name>
<accession>Q703I1</accession>
<proteinExistence type="evidence at protein level"/>
<comment type="alternative products">
    <event type="alternative splicing"/>
    <isoform>
        <id>Q703I1-1</id>
        <name>1</name>
        <sequence type="displayed"/>
    </isoform>
    <isoform>
        <id>Q703I1-2</id>
        <name>2</name>
        <sequence type="described" ref="VSP_047453"/>
    </isoform>
</comment>
<comment type="tissue specificity">
    <molecule>Isoform 1</molecule>
    <text evidence="2">Ubiquitous with high level in testis, placenta and cardiac myocytes.</text>
</comment>
<comment type="tissue specificity">
    <molecule>Isoform 2</molecule>
    <text evidence="2">Expressed in testis, unpreganant uterus and cardiac myocytes.</text>
</comment>
<comment type="induction">
    <molecule>Isoform 1</molecule>
    <text evidence="2">Up-regulated by DNA damaging agents like H(2)O(2) in cardiac myocytes.</text>
</comment>
<comment type="induction">
    <molecule>Isoform 2</molecule>
    <text evidence="2">Up-regulated by DNA damaging agents like H(2)O(2) in cardiac myocytes.</text>
</comment>
<feature type="chain" id="PRO_0000422974" description="Oxidative stress-responsive serine-rich protein 1">
    <location>
        <begin position="1"/>
        <end position="291"/>
    </location>
</feature>
<feature type="region of interest" description="Disordered" evidence="1">
    <location>
        <begin position="44"/>
        <end position="139"/>
    </location>
</feature>
<feature type="compositionally biased region" description="Basic residues" evidence="1">
    <location>
        <begin position="65"/>
        <end position="83"/>
    </location>
</feature>
<feature type="compositionally biased region" description="Polar residues" evidence="1">
    <location>
        <begin position="95"/>
        <end position="113"/>
    </location>
</feature>
<feature type="compositionally biased region" description="Polar residues" evidence="1">
    <location>
        <begin position="127"/>
        <end position="139"/>
    </location>
</feature>
<feature type="modified residue" description="Phosphothreonine" evidence="4">
    <location>
        <position position="143"/>
    </location>
</feature>
<feature type="splice variant" id="VSP_047453" description="In isoform 2." evidence="3">
    <location>
        <begin position="60"/>
        <end position="280"/>
    </location>
</feature>
<sequence>MKSEAKDGEEESLQTAFKKLRVDASGSIVSLSVGEGTSVRASVRTTVDDTKPKTMCAPKDSWHGSTRKSSRGAVRIQRRRRSKSPVLHPPKFIHCSTTASPSSSQLKQRSQTEPLDGSSGRGISTPKEFSTGENSTSLDINHTGAAIEPLRSSVLRLPSESKTEELSDATQVSPESLTANDLSDFQSVSKLSQGKPCVCVGKACQCKRWHDMEVYSFSGLQNVPPLAPERRSLEDYSQSLHTRTLSGSPRSCSEQARVYVDDVTIEDLAGYMEYYLYIPKKMSHMAEMMYT</sequence>